<feature type="initiator methionine" description="Removed" evidence="8">
    <location>
        <position position="1"/>
    </location>
</feature>
<feature type="chain" id="PRO_0000096496" description="Membrane protein MLC1">
    <location>
        <begin position="2"/>
        <end position="377"/>
    </location>
</feature>
<feature type="transmembrane region" description="Helical" evidence="2">
    <location>
        <begin position="52"/>
        <end position="72"/>
    </location>
</feature>
<feature type="transmembrane region" description="Helical" evidence="2">
    <location>
        <begin position="82"/>
        <end position="100"/>
    </location>
</feature>
<feature type="transmembrane region" description="Helical" evidence="2">
    <location>
        <begin position="111"/>
        <end position="131"/>
    </location>
</feature>
<feature type="transmembrane region" description="Helical" evidence="2">
    <location>
        <begin position="144"/>
        <end position="164"/>
    </location>
</feature>
<feature type="transmembrane region" description="Helical" evidence="2">
    <location>
        <begin position="199"/>
        <end position="219"/>
    </location>
</feature>
<feature type="transmembrane region" description="Helical" evidence="2">
    <location>
        <begin position="230"/>
        <end position="250"/>
    </location>
</feature>
<feature type="transmembrane region" description="Helical" evidence="2">
    <location>
        <begin position="257"/>
        <end position="277"/>
    </location>
</feature>
<feature type="transmembrane region" description="Helical" evidence="2">
    <location>
        <begin position="304"/>
        <end position="324"/>
    </location>
</feature>
<feature type="region of interest" description="Disordered" evidence="3">
    <location>
        <begin position="1"/>
        <end position="36"/>
    </location>
</feature>
<feature type="compositionally biased region" description="Basic and acidic residues" evidence="3">
    <location>
        <begin position="1"/>
        <end position="23"/>
    </location>
</feature>
<feature type="modified residue" description="Phosphoserine" evidence="1">
    <location>
        <position position="177"/>
    </location>
</feature>
<feature type="modified residue" description="Phosphoserine" evidence="1">
    <location>
        <position position="179"/>
    </location>
</feature>
<feature type="splice variant" id="VSP_055494" description="In isoform 2." evidence="13">
    <location>
        <begin position="60"/>
        <end position="89"/>
    </location>
</feature>
<feature type="sequence variant" id="VAR_017438" description="In MLC1; dbSNP:rs80358242." evidence="7">
    <original>G</original>
    <variation>E</variation>
    <location>
        <position position="59"/>
    </location>
</feature>
<feature type="sequence variant" id="VAR_067762" description="In MLC1; dbSNP:rs281875309." evidence="9">
    <original>S</original>
    <variation>L</variation>
    <location>
        <position position="69"/>
    </location>
</feature>
<feature type="sequence variant" id="VAR_067763" description="In MLC1; dbSNP:rs281875310." evidence="9">
    <original>M</original>
    <variation>I</variation>
    <location>
        <position position="80"/>
    </location>
</feature>
<feature type="sequence variant" id="VAR_067764" description="In MLC1; dbSNP:rs281875311." evidence="9">
    <original>R</original>
    <variation>C</variation>
    <location>
        <position position="84"/>
    </location>
</feature>
<feature type="sequence variant" id="VAR_017439" description="In MLC1; dbSNP:rs121908345." evidence="6">
    <original>P</original>
    <variation>S</variation>
    <location>
        <position position="92"/>
    </location>
</feature>
<feature type="sequence variant" id="VAR_011699" description="In MLC1; dbSNP:rs80358245." evidence="4">
    <original>S</original>
    <variation>L</variation>
    <location>
        <position position="93"/>
    </location>
</feature>
<feature type="sequence variant" id="VAR_011700" description="In MLC1; dbSNP:rs281875316." evidence="4">
    <original>T</original>
    <variation>R</variation>
    <location>
        <position position="118"/>
    </location>
</feature>
<feature type="sequence variant" id="VAR_067765" description="In MLC1; accumulates in the cytoplasmic perinuclear region and endoplasmic reticulum; affects interaction with ATP1B1; dbSNP:rs281875314." evidence="6 10">
    <original>C</original>
    <variation>R</variation>
    <location>
        <position position="125"/>
    </location>
</feature>
<feature type="sequence variant" id="VAR_017440" description="In MLC1; dbSNP:rs121908343." evidence="6">
    <original>N</original>
    <variation>K</variation>
    <location>
        <position position="141"/>
    </location>
</feature>
<feature type="sequence variant" id="VAR_017441" description="In MLC1; dbSNP:rs121908344." evidence="6">
    <original>N</original>
    <variation>S</variation>
    <location>
        <position position="141"/>
    </location>
</feature>
<feature type="sequence variant" id="VAR_051186" description="In dbSNP:rs6010260.">
    <original>C</original>
    <variation>F</variation>
    <location>
        <position position="171"/>
    </location>
</feature>
<feature type="sequence variant" id="VAR_011701" description="In MLC1; dbSNP:rs281875317." evidence="4">
    <original>G</original>
    <variation>R</variation>
    <location>
        <position position="212"/>
    </location>
</feature>
<feature type="sequence variant" id="VAR_067766" description="In MLC1; dbSNP:rs281875312." evidence="9">
    <original>A</original>
    <variation>P</variation>
    <location>
        <position position="245"/>
    </location>
</feature>
<feature type="sequence variant" id="VAR_067767" description="In MLC1; does not affect subcellular location; dbSNP:rs281875315." evidence="6 10">
    <original>S</original>
    <variation>R</variation>
    <location>
        <position position="246"/>
    </location>
</feature>
<feature type="sequence variant" id="VAR_011702" description="In MLC1; accumulates in the cytoplasmic perinuclear region and endoplasmic reticulum; affects the interaction with ATP1B1, TRPV4, AQP4 and HEPACAM; dbSNP:rs121908341." evidence="4 10">
    <original>S</original>
    <variation>L</variation>
    <location>
        <position position="280"/>
    </location>
</feature>
<feature type="sequence variant" id="VAR_012731" description="In a pedigree affected by schizophrenia; dbSNP:rs80358240." evidence="5">
    <original>L</original>
    <variation>M</variation>
    <location>
        <position position="309"/>
    </location>
</feature>
<feature type="sequence variant" id="VAR_067768" description="In MLC1; dbSNP:rs281875313." evidence="9">
    <original>T</original>
    <variation>K</variation>
    <location>
        <position position="320"/>
    </location>
</feature>
<feature type="sequence variant" id="VAR_051187" description="In dbSNP:rs11568188.">
    <original>N</original>
    <variation>S</variation>
    <location>
        <position position="344"/>
    </location>
</feature>
<feature type="sequence conflict" description="In Ref. 8; AAH28425." evidence="15" ref="8">
    <original>P</original>
    <variation>H</variation>
    <location>
        <position position="25"/>
    </location>
</feature>
<evidence type="ECO:0000250" key="1">
    <source>
        <dbReference type="UniProtKB" id="Q8VHK5"/>
    </source>
</evidence>
<evidence type="ECO:0000255" key="2"/>
<evidence type="ECO:0000256" key="3">
    <source>
        <dbReference type="SAM" id="MobiDB-lite"/>
    </source>
</evidence>
<evidence type="ECO:0000269" key="4">
    <source>
    </source>
</evidence>
<evidence type="ECO:0000269" key="5">
    <source>
    </source>
</evidence>
<evidence type="ECO:0000269" key="6">
    <source>
    </source>
</evidence>
<evidence type="ECO:0000269" key="7">
    <source>
    </source>
</evidence>
<evidence type="ECO:0000269" key="8">
    <source>
    </source>
</evidence>
<evidence type="ECO:0000269" key="9">
    <source>
    </source>
</evidence>
<evidence type="ECO:0000269" key="10">
    <source>
    </source>
</evidence>
<evidence type="ECO:0000303" key="11">
    <source>
    </source>
</evidence>
<evidence type="ECO:0000303" key="12">
    <source>
    </source>
</evidence>
<evidence type="ECO:0000303" key="13">
    <source>
    </source>
</evidence>
<evidence type="ECO:0000303" key="14">
    <source>
    </source>
</evidence>
<evidence type="ECO:0000305" key="15"/>
<evidence type="ECO:0000305" key="16">
    <source>
    </source>
</evidence>
<evidence type="ECO:0000312" key="17">
    <source>
        <dbReference type="HGNC" id="HGNC:17082"/>
    </source>
</evidence>
<keyword id="KW-0025">Alternative splicing</keyword>
<keyword id="KW-1003">Cell membrane</keyword>
<keyword id="KW-0963">Cytoplasm</keyword>
<keyword id="KW-0903">Direct protein sequencing</keyword>
<keyword id="KW-0225">Disease variant</keyword>
<keyword id="KW-0256">Endoplasmic reticulum</keyword>
<keyword id="KW-0472">Membrane</keyword>
<keyword id="KW-0597">Phosphoprotein</keyword>
<keyword id="KW-1267">Proteomics identification</keyword>
<keyword id="KW-1185">Reference proteome</keyword>
<keyword id="KW-0812">Transmembrane</keyword>
<keyword id="KW-1133">Transmembrane helix</keyword>
<comment type="function">
    <text evidence="10 16">Transmembrane protein mainly expressed in brain astrocytes that may play a role in transport across the blood-brain and brain-cerebrospinal fluid barriers (PubMed:22328087). Regulates the response of astrocytes to hypo-osmosis by promoting calcium influx (PubMed:22328087). May function as regulatory protein of membrane protein complexes such as ion channels (Probable).</text>
</comment>
<comment type="subunit">
    <text evidence="10">Interacts with ATP1B1. Part of a complex containing ATP1B1, TRPV4, AQP4 and HEPACAM.</text>
</comment>
<comment type="interaction">
    <interactant intactId="EBI-8475277">
        <id>Q15049</id>
    </interactant>
    <interactant intactId="EBI-702390">
        <id>Q9UBB4</id>
        <label>ATXN10</label>
    </interactant>
    <organismsDiffer>false</organismsDiffer>
    <experiments>3</experiments>
</comment>
<comment type="interaction">
    <interactant intactId="EBI-8475277">
        <id>Q15049</id>
    </interactant>
    <interactant intactId="EBI-750300">
        <id>Q01658</id>
        <label>DR1</label>
    </interactant>
    <organismsDiffer>false</organismsDiffer>
    <experiments>3</experiments>
</comment>
<comment type="interaction">
    <interactant intactId="EBI-8475277">
        <id>Q15049</id>
    </interactant>
    <interactant intactId="EBI-744302">
        <id>P14136</id>
        <label>GFAP</label>
    </interactant>
    <organismsDiffer>false</organismsDiffer>
    <experiments>3</experiments>
</comment>
<comment type="interaction">
    <interactant intactId="EBI-8475277">
        <id>Q15049</id>
    </interactant>
    <interactant intactId="EBI-389564">
        <id>Q00403</id>
        <label>GTF2B</label>
    </interactant>
    <organismsDiffer>false</organismsDiffer>
    <experiments>3</experiments>
</comment>
<comment type="interaction">
    <interactant intactId="EBI-8475277">
        <id>Q15049</id>
    </interactant>
    <interactant intactId="EBI-1054873">
        <id>Q9Y5Q9</id>
        <label>GTF3C3</label>
    </interactant>
    <organismsDiffer>false</organismsDiffer>
    <experiments>3</experiments>
</comment>
<comment type="interaction">
    <interactant intactId="EBI-8475277">
        <id>Q15049</id>
    </interactant>
    <interactant intactId="EBI-352682">
        <id>P04792</id>
        <label>HSPB1</label>
    </interactant>
    <organismsDiffer>false</organismsDiffer>
    <experiments>3</experiments>
</comment>
<comment type="interaction">
    <interactant intactId="EBI-8475277">
        <id>Q15049</id>
    </interactant>
    <interactant intactId="EBI-1055254">
        <id>Q8WXH2</id>
        <label>JPH3</label>
    </interactant>
    <organismsDiffer>false</organismsDiffer>
    <experiments>3</experiments>
</comment>
<comment type="interaction">
    <interactant intactId="EBI-8475277">
        <id>Q15049</id>
    </interactant>
    <interactant intactId="EBI-10975473">
        <id>O60333-2</id>
        <label>KIF1B</label>
    </interactant>
    <organismsDiffer>false</organismsDiffer>
    <experiments>3</experiments>
</comment>
<comment type="interaction">
    <interactant intactId="EBI-8475277">
        <id>Q15049</id>
    </interactant>
    <interactant intactId="EBI-475646">
        <id>P07196</id>
        <label>NEFL</label>
    </interactant>
    <organismsDiffer>false</organismsDiffer>
    <experiments>3</experiments>
</comment>
<comment type="interaction">
    <interactant intactId="EBI-8475277">
        <id>Q15049</id>
    </interactant>
    <interactant intactId="EBI-749195">
        <id>P60891</id>
        <label>PRPS1</label>
    </interactant>
    <organismsDiffer>false</organismsDiffer>
    <experiments>3</experiments>
</comment>
<comment type="interaction">
    <interactant intactId="EBI-8475277">
        <id>Q15049</id>
    </interactant>
    <interactant intactId="EBI-396669">
        <id>Q9Y3C5</id>
        <label>RNF11</label>
    </interactant>
    <organismsDiffer>false</organismsDiffer>
    <experiments>3</experiments>
</comment>
<comment type="interaction">
    <interactant intactId="EBI-8475277">
        <id>Q15049</id>
    </interactant>
    <interactant intactId="EBI-372899">
        <id>Q13148</id>
        <label>TARDBP</label>
    </interactant>
    <organismsDiffer>false</organismsDiffer>
    <experiments>6</experiments>
</comment>
<comment type="interaction">
    <interactant intactId="EBI-8475277">
        <id>Q15049</id>
    </interactant>
    <interactant intactId="EBI-720609">
        <id>O76024</id>
        <label>WFS1</label>
    </interactant>
    <organismsDiffer>false</organismsDiffer>
    <experiments>3</experiments>
</comment>
<comment type="subcellular location">
    <subcellularLocation>
        <location evidence="15">Membrane</location>
        <topology evidence="2">Multi-pass membrane protein</topology>
    </subcellularLocation>
    <subcellularLocation>
        <location evidence="10">Cell membrane</location>
        <topology evidence="2">Multi-pass membrane protein</topology>
    </subcellularLocation>
    <subcellularLocation>
        <location evidence="10">Cytoplasm</location>
        <location evidence="10">Perinuclear region</location>
    </subcellularLocation>
    <subcellularLocation>
        <location evidence="10">Endoplasmic reticulum</location>
    </subcellularLocation>
</comment>
<comment type="alternative products">
    <event type="alternative splicing"/>
    <isoform>
        <id>Q15049-1</id>
        <name>1</name>
        <sequence type="displayed"/>
    </isoform>
    <isoform>
        <id>Q15049-2</id>
        <name>2</name>
        <sequence type="described" ref="VSP_055494"/>
    </isoform>
</comment>
<comment type="tissue specificity">
    <text evidence="5">Expressed in the brain, with highest levels found in the amygdala, nucleus caudatus, thalamus and hippocampus.</text>
</comment>
<comment type="disease" evidence="4 6 7 9 10">
    <disease id="DI-01960">
        <name>Megalencephalic leukoencephalopathy with subcortical cysts 1</name>
        <acronym>MLC1</acronym>
        <description>A syndrome of cerebral leukoencephalopathy and megalencephaly characterized by ataxia, spasticity, seizures, delay in motor development and mild intellectual disability. The brain appears swollen on magnetic resonance imaging, with diffuse white-matter abnormalities and the invariable presence of subcortical cysts in frontal and temporal lobes.</description>
        <dbReference type="MIM" id="604004"/>
    </disease>
    <text>The disease is caused by variants affecting the gene represented in this entry.</text>
</comment>
<comment type="caution">
    <text evidence="5">Was initially predicted to function as cation channel based on marginal amino acid sequence homology with a voltage-gated K+ channel KCNA1.</text>
</comment>
<comment type="sequence caution" evidence="15">
    <conflict type="erroneous initiation">
        <sequence resource="EMBL-CDS" id="BAA04947"/>
    </conflict>
</comment>
<comment type="online information" name="Mendelian genes megalencephalic leukoencephalopathy with subcortical cysts 1 (MLC1)">
    <link uri="https://databases.lovd.nl/shared/genes/MLC1"/>
    <text>Leiden Open Variation Database (LOVD)</text>
</comment>
<sequence length="377" mass="41141">MTQEPFREELAYDRMPTLERGRQDPASYAPDAKPSDLQLSKRLPPCFSHKTWVFSVLMGSCLLVTSGFSLYLGNVFPAEMDYLRCAAGSCIPSAIVSFTVSRRNANVIPNFQILFVSTFAVTTTCLIWFGCKLVLNPSAININFNLILLLLLELLMAATVIIAARSSEEDCKKKKGSMSDSANILDEVPFPARVLKSYSVVEVIAGISAVLGGIIALNVDDSVSGPHLSVTFFWILVACFPSAIASHVAAECPSKCLVEVLIAISSLTSPLLFTASGYLSFSIMRIVEMFKDYPPAIKPSYDVLLLLLLLVLLLQAGLNTGTAIQCVRFKVSARLQGASWDTQNGPQERLAGEVARSPLKEFDKEKAWRAVVVQMAQ</sequence>
<proteinExistence type="evidence at protein level"/>
<dbReference type="EMBL" id="AF319633">
    <property type="protein sequence ID" value="AAK60119.1"/>
    <property type="molecule type" value="mRNA"/>
</dbReference>
<dbReference type="EMBL" id="D25217">
    <property type="protein sequence ID" value="BAA04947.3"/>
    <property type="status" value="ALT_INIT"/>
    <property type="molecule type" value="mRNA"/>
</dbReference>
<dbReference type="EMBL" id="CR456460">
    <property type="protein sequence ID" value="CAG30346.1"/>
    <property type="molecule type" value="mRNA"/>
</dbReference>
<dbReference type="EMBL" id="AK124264">
    <property type="protein sequence ID" value="BAG54023.1"/>
    <property type="molecule type" value="mRNA"/>
</dbReference>
<dbReference type="EMBL" id="AK299841">
    <property type="protein sequence ID" value="BAH13145.1"/>
    <property type="molecule type" value="mRNA"/>
</dbReference>
<dbReference type="EMBL" id="AL022327">
    <property type="status" value="NOT_ANNOTATED_CDS"/>
    <property type="molecule type" value="Genomic_DNA"/>
</dbReference>
<dbReference type="EMBL" id="CH471138">
    <property type="protein sequence ID" value="EAW73490.1"/>
    <property type="molecule type" value="Genomic_DNA"/>
</dbReference>
<dbReference type="EMBL" id="BC028425">
    <property type="protein sequence ID" value="AAH28425.1"/>
    <property type="molecule type" value="mRNA"/>
</dbReference>
<dbReference type="CCDS" id="CCDS14083.1">
    <molecule id="Q15049-1"/>
</dbReference>
<dbReference type="RefSeq" id="NP_001363401.1">
    <molecule id="Q15049-1"/>
    <property type="nucleotide sequence ID" value="NM_001376472.1"/>
</dbReference>
<dbReference type="RefSeq" id="NP_001363402.1">
    <molecule id="Q15049-1"/>
    <property type="nucleotide sequence ID" value="NM_001376473.1"/>
</dbReference>
<dbReference type="RefSeq" id="NP_001363403.1">
    <molecule id="Q15049-1"/>
    <property type="nucleotide sequence ID" value="NM_001376474.1"/>
</dbReference>
<dbReference type="RefSeq" id="NP_001363404.1">
    <molecule id="Q15049-1"/>
    <property type="nucleotide sequence ID" value="NM_001376475.1"/>
</dbReference>
<dbReference type="RefSeq" id="NP_001363405.1">
    <molecule id="Q15049-1"/>
    <property type="nucleotide sequence ID" value="NM_001376476.1"/>
</dbReference>
<dbReference type="RefSeq" id="NP_001363406.1">
    <molecule id="Q15049-1"/>
    <property type="nucleotide sequence ID" value="NM_001376477.1"/>
</dbReference>
<dbReference type="RefSeq" id="NP_001363407.1">
    <molecule id="Q15049-1"/>
    <property type="nucleotide sequence ID" value="NM_001376478.1"/>
</dbReference>
<dbReference type="RefSeq" id="NP_001363409.1">
    <molecule id="Q15049-2"/>
    <property type="nucleotide sequence ID" value="NM_001376480.1"/>
</dbReference>
<dbReference type="RefSeq" id="NP_055981.1">
    <molecule id="Q15049-1"/>
    <property type="nucleotide sequence ID" value="NM_015166.4"/>
</dbReference>
<dbReference type="RefSeq" id="NP_631941.1">
    <molecule id="Q15049-1"/>
    <property type="nucleotide sequence ID" value="NM_139202.3"/>
</dbReference>
<dbReference type="RefSeq" id="XP_016884160.1">
    <property type="nucleotide sequence ID" value="XM_017028671.1"/>
</dbReference>
<dbReference type="BioGRID" id="116816">
    <property type="interactions" value="25"/>
</dbReference>
<dbReference type="CORUM" id="Q15049"/>
<dbReference type="FunCoup" id="Q15049">
    <property type="interactions" value="133"/>
</dbReference>
<dbReference type="IntAct" id="Q15049">
    <property type="interactions" value="27"/>
</dbReference>
<dbReference type="MINT" id="Q15049"/>
<dbReference type="STRING" id="9606.ENSP00000310375"/>
<dbReference type="ChEMBL" id="CHEMBL4523299"/>
<dbReference type="TCDB" id="9.B.129.1.1">
    <property type="family name" value="the membrane protein mlc1 (mlc1) family"/>
</dbReference>
<dbReference type="GlyGen" id="Q15049">
    <property type="glycosylation" value="1 site"/>
</dbReference>
<dbReference type="iPTMnet" id="Q15049"/>
<dbReference type="PhosphoSitePlus" id="Q15049"/>
<dbReference type="BioMuta" id="MLC1"/>
<dbReference type="DMDM" id="20141590"/>
<dbReference type="MassIVE" id="Q15049"/>
<dbReference type="PaxDb" id="9606-ENSP00000310375"/>
<dbReference type="PeptideAtlas" id="Q15049"/>
<dbReference type="ProteomicsDB" id="60401">
    <molecule id="Q15049-1"/>
</dbReference>
<dbReference type="ProteomicsDB" id="6749"/>
<dbReference type="Antibodypedia" id="297">
    <property type="antibodies" value="163 antibodies from 27 providers"/>
</dbReference>
<dbReference type="DNASU" id="23209"/>
<dbReference type="Ensembl" id="ENST00000311597.10">
    <molecule id="Q15049-1"/>
    <property type="protein sequence ID" value="ENSP00000310375.6"/>
    <property type="gene ID" value="ENSG00000100427.16"/>
</dbReference>
<dbReference type="Ensembl" id="ENST00000395876.6">
    <molecule id="Q15049-1"/>
    <property type="protein sequence ID" value="ENSP00000379216.2"/>
    <property type="gene ID" value="ENSG00000100427.16"/>
</dbReference>
<dbReference type="GeneID" id="23209"/>
<dbReference type="KEGG" id="hsa:23209"/>
<dbReference type="MANE-Select" id="ENST00000311597.10">
    <property type="protein sequence ID" value="ENSP00000310375.6"/>
    <property type="RefSeq nucleotide sequence ID" value="NM_015166.4"/>
    <property type="RefSeq protein sequence ID" value="NP_055981.1"/>
</dbReference>
<dbReference type="UCSC" id="uc003bjg.2">
    <molecule id="Q15049-1"/>
    <property type="organism name" value="human"/>
</dbReference>
<dbReference type="AGR" id="HGNC:17082"/>
<dbReference type="CTD" id="23209"/>
<dbReference type="DisGeNET" id="23209"/>
<dbReference type="GeneCards" id="MLC1"/>
<dbReference type="GeneReviews" id="MLC1"/>
<dbReference type="HGNC" id="HGNC:17082">
    <property type="gene designation" value="MLC1"/>
</dbReference>
<dbReference type="HPA" id="ENSG00000100427">
    <property type="expression patterns" value="Tissue enriched (brain)"/>
</dbReference>
<dbReference type="MalaCards" id="MLC1"/>
<dbReference type="MIM" id="604004">
    <property type="type" value="phenotype"/>
</dbReference>
<dbReference type="MIM" id="605908">
    <property type="type" value="gene"/>
</dbReference>
<dbReference type="neXtProt" id="NX_Q15049"/>
<dbReference type="OpenTargets" id="ENSG00000100427"/>
<dbReference type="Orphanet" id="2478">
    <property type="disease" value="Megalencephalic leukoencephalopathy with subcortical cysts"/>
</dbReference>
<dbReference type="PharmGKB" id="PA38199"/>
<dbReference type="VEuPathDB" id="HostDB:ENSG00000100427"/>
<dbReference type="eggNOG" id="ENOG502QUF1">
    <property type="taxonomic scope" value="Eukaryota"/>
</dbReference>
<dbReference type="GeneTree" id="ENSGT00390000015442"/>
<dbReference type="InParanoid" id="Q15049"/>
<dbReference type="OMA" id="KAWRAVM"/>
<dbReference type="OrthoDB" id="8806209at2759"/>
<dbReference type="PAN-GO" id="Q15049">
    <property type="GO annotations" value="4 GO annotations based on evolutionary models"/>
</dbReference>
<dbReference type="PhylomeDB" id="Q15049"/>
<dbReference type="TreeFam" id="TF333109"/>
<dbReference type="PathwayCommons" id="Q15049"/>
<dbReference type="SignaLink" id="Q15049"/>
<dbReference type="BioGRID-ORCS" id="23209">
    <property type="hits" value="13 hits in 1147 CRISPR screens"/>
</dbReference>
<dbReference type="ChiTaRS" id="MLC1">
    <property type="organism name" value="human"/>
</dbReference>
<dbReference type="GeneWiki" id="MLC1"/>
<dbReference type="GenomeRNAi" id="23209"/>
<dbReference type="Pharos" id="Q15049">
    <property type="development level" value="Tbio"/>
</dbReference>
<dbReference type="PRO" id="PR:Q15049"/>
<dbReference type="Proteomes" id="UP000005640">
    <property type="component" value="Chromosome 22"/>
</dbReference>
<dbReference type="RNAct" id="Q15049">
    <property type="molecule type" value="protein"/>
</dbReference>
<dbReference type="Bgee" id="ENSG00000100427">
    <property type="expression patterns" value="Expressed in nucleus accumbens and 120 other cell types or tissues"/>
</dbReference>
<dbReference type="ExpressionAtlas" id="Q15049">
    <property type="expression patterns" value="baseline and differential"/>
</dbReference>
<dbReference type="GO" id="GO:0016324">
    <property type="term" value="C:apical plasma membrane"/>
    <property type="evidence" value="ECO:0007669"/>
    <property type="project" value="Ensembl"/>
</dbReference>
<dbReference type="GO" id="GO:0097450">
    <property type="term" value="C:astrocyte end-foot"/>
    <property type="evidence" value="ECO:0007669"/>
    <property type="project" value="Ensembl"/>
</dbReference>
<dbReference type="GO" id="GO:0016323">
    <property type="term" value="C:basolateral plasma membrane"/>
    <property type="evidence" value="ECO:0000314"/>
    <property type="project" value="UniProtKB"/>
</dbReference>
<dbReference type="GO" id="GO:0005901">
    <property type="term" value="C:caveola"/>
    <property type="evidence" value="ECO:0000250"/>
    <property type="project" value="UniProtKB"/>
</dbReference>
<dbReference type="GO" id="GO:0005911">
    <property type="term" value="C:cell-cell junction"/>
    <property type="evidence" value="ECO:0000314"/>
    <property type="project" value="MGI"/>
</dbReference>
<dbReference type="GO" id="GO:0005737">
    <property type="term" value="C:cytoplasm"/>
    <property type="evidence" value="ECO:0000314"/>
    <property type="project" value="UniProtKB"/>
</dbReference>
<dbReference type="GO" id="GO:0031410">
    <property type="term" value="C:cytoplasmic vesicle"/>
    <property type="evidence" value="ECO:0000314"/>
    <property type="project" value="UniProtKB"/>
</dbReference>
<dbReference type="GO" id="GO:0005829">
    <property type="term" value="C:cytosol"/>
    <property type="evidence" value="ECO:0000314"/>
    <property type="project" value="HPA"/>
</dbReference>
<dbReference type="GO" id="GO:0005769">
    <property type="term" value="C:early endosome"/>
    <property type="evidence" value="ECO:0000250"/>
    <property type="project" value="UniProtKB"/>
</dbReference>
<dbReference type="GO" id="GO:0005783">
    <property type="term" value="C:endoplasmic reticulum"/>
    <property type="evidence" value="ECO:0000314"/>
    <property type="project" value="UniProtKB"/>
</dbReference>
<dbReference type="GO" id="GO:0005768">
    <property type="term" value="C:endosome"/>
    <property type="evidence" value="ECO:0000314"/>
    <property type="project" value="UniProtKB"/>
</dbReference>
<dbReference type="GO" id="GO:0005764">
    <property type="term" value="C:lysosome"/>
    <property type="evidence" value="ECO:0000250"/>
    <property type="project" value="UniProtKB"/>
</dbReference>
<dbReference type="GO" id="GO:0016020">
    <property type="term" value="C:membrane"/>
    <property type="evidence" value="ECO:0000314"/>
    <property type="project" value="UniProtKB"/>
</dbReference>
<dbReference type="GO" id="GO:0045121">
    <property type="term" value="C:membrane raft"/>
    <property type="evidence" value="ECO:0000250"/>
    <property type="project" value="UniProtKB"/>
</dbReference>
<dbReference type="GO" id="GO:0048471">
    <property type="term" value="C:perinuclear region of cytoplasm"/>
    <property type="evidence" value="ECO:0000314"/>
    <property type="project" value="UniProtKB"/>
</dbReference>
<dbReference type="GO" id="GO:0005886">
    <property type="term" value="C:plasma membrane"/>
    <property type="evidence" value="ECO:0000314"/>
    <property type="project" value="UniProtKB"/>
</dbReference>
<dbReference type="GO" id="GO:0055037">
    <property type="term" value="C:recycling endosome"/>
    <property type="evidence" value="ECO:0000250"/>
    <property type="project" value="UniProtKB"/>
</dbReference>
<dbReference type="GO" id="GO:0042802">
    <property type="term" value="F:identical protein binding"/>
    <property type="evidence" value="ECO:0000353"/>
    <property type="project" value="UniProtKB"/>
</dbReference>
<dbReference type="GO" id="GO:0044877">
    <property type="term" value="F:protein-containing complex binding"/>
    <property type="evidence" value="ECO:0000314"/>
    <property type="project" value="UniProtKB"/>
</dbReference>
<dbReference type="GO" id="GO:0072584">
    <property type="term" value="P:caveolin-mediated endocytosis"/>
    <property type="evidence" value="ECO:0000250"/>
    <property type="project" value="UniProtKB"/>
</dbReference>
<dbReference type="GO" id="GO:0071397">
    <property type="term" value="P:cellular response to cholesterol"/>
    <property type="evidence" value="ECO:0000250"/>
    <property type="project" value="UniProtKB"/>
</dbReference>
<dbReference type="GO" id="GO:0032388">
    <property type="term" value="P:positive regulation of intracellular transport"/>
    <property type="evidence" value="ECO:0000314"/>
    <property type="project" value="UniProtKB"/>
</dbReference>
<dbReference type="GO" id="GO:0015031">
    <property type="term" value="P:protein transport"/>
    <property type="evidence" value="ECO:0007669"/>
    <property type="project" value="Ensembl"/>
</dbReference>
<dbReference type="GO" id="GO:0047484">
    <property type="term" value="P:regulation of response to osmotic stress"/>
    <property type="evidence" value="ECO:0000315"/>
    <property type="project" value="UniProtKB"/>
</dbReference>
<dbReference type="GO" id="GO:0016192">
    <property type="term" value="P:vesicle-mediated transport"/>
    <property type="evidence" value="ECO:0000250"/>
    <property type="project" value="UniProtKB"/>
</dbReference>
<dbReference type="InterPro" id="IPR033280">
    <property type="entry name" value="Membrane_MLC1"/>
</dbReference>
<dbReference type="PANTHER" id="PTHR17597">
    <property type="entry name" value="MEMBRANE PROTEIN MLC1"/>
    <property type="match status" value="1"/>
</dbReference>
<dbReference type="PANTHER" id="PTHR17597:SF0">
    <property type="entry name" value="MEMBRANE PROTEIN MLC1"/>
    <property type="match status" value="1"/>
</dbReference>
<name>MLC1_HUMAN</name>
<reference key="1">
    <citation type="journal article" date="2001" name="Mol. Psychiatry">
        <title>A missense mutation in a novel gene encoding a putative cation channel is associated with catatonic schizophrenia in a large pedigree.</title>
        <authorList>
            <person name="Meyer J."/>
            <person name="Huberth A."/>
            <person name="Ortega G."/>
            <person name="Syagailo Y.V."/>
            <person name="Jatzke S."/>
            <person name="Moessner R."/>
            <person name="Strom T.M."/>
            <person name="Ulzheimer-Teuber I."/>
            <person name="Stoeber G."/>
            <person name="Schmitt A."/>
            <person name="Lesch K.P."/>
        </authorList>
    </citation>
    <scope>NUCLEOTIDE SEQUENCE [GENOMIC DNA / MRNA] (ISOFORM 1)</scope>
    <scope>TISSUE SPECIFICITY</scope>
    <scope>VARIANT MET-309</scope>
    <source>
        <tissue>Hippocampus</tissue>
    </source>
</reference>
<reference key="2">
    <citation type="journal article" date="1994" name="DNA Res.">
        <title>Prediction of the coding sequences of unidentified human genes. I. The coding sequences of 40 new genes (KIAA0001-KIAA0040) deduced by analysis of randomly sampled cDNA clones from human immature myeloid cell line KG-1.</title>
        <authorList>
            <person name="Nomura N."/>
            <person name="Miyajima N."/>
            <person name="Sazuka T."/>
            <person name="Tanaka A."/>
            <person name="Kawarabayasi Y."/>
            <person name="Sato S."/>
            <person name="Nagase T."/>
            <person name="Seki N."/>
            <person name="Ishikawa K."/>
            <person name="Tabata S."/>
        </authorList>
    </citation>
    <scope>NUCLEOTIDE SEQUENCE [LARGE SCALE MRNA] (ISOFORM 1)</scope>
    <source>
        <tissue>Bone marrow</tissue>
    </source>
</reference>
<reference key="3">
    <citation type="journal article" date="2002" name="DNA Res.">
        <title>Construction of expression-ready cDNA clones for KIAA genes: manual curation of 330 KIAA cDNA clones.</title>
        <authorList>
            <person name="Nakajima D."/>
            <person name="Okazaki N."/>
            <person name="Yamakawa H."/>
            <person name="Kikuno R."/>
            <person name="Ohara O."/>
            <person name="Nagase T."/>
        </authorList>
    </citation>
    <scope>SEQUENCE REVISION</scope>
</reference>
<reference key="4">
    <citation type="journal article" date="2004" name="Genome Biol.">
        <title>A genome annotation-driven approach to cloning the human ORFeome.</title>
        <authorList>
            <person name="Collins J.E."/>
            <person name="Wright C.L."/>
            <person name="Edwards C.A."/>
            <person name="Davis M.P."/>
            <person name="Grinham J.A."/>
            <person name="Cole C.G."/>
            <person name="Goward M.E."/>
            <person name="Aguado B."/>
            <person name="Mallya M."/>
            <person name="Mokrab Y."/>
            <person name="Huckle E.J."/>
            <person name="Beare D.M."/>
            <person name="Dunham I."/>
        </authorList>
    </citation>
    <scope>NUCLEOTIDE SEQUENCE [LARGE SCALE MRNA] (ISOFORM 1)</scope>
</reference>
<reference key="5">
    <citation type="journal article" date="2004" name="Nat. Genet.">
        <title>Complete sequencing and characterization of 21,243 full-length human cDNAs.</title>
        <authorList>
            <person name="Ota T."/>
            <person name="Suzuki Y."/>
            <person name="Nishikawa T."/>
            <person name="Otsuki T."/>
            <person name="Sugiyama T."/>
            <person name="Irie R."/>
            <person name="Wakamatsu A."/>
            <person name="Hayashi K."/>
            <person name="Sato H."/>
            <person name="Nagai K."/>
            <person name="Kimura K."/>
            <person name="Makita H."/>
            <person name="Sekine M."/>
            <person name="Obayashi M."/>
            <person name="Nishi T."/>
            <person name="Shibahara T."/>
            <person name="Tanaka T."/>
            <person name="Ishii S."/>
            <person name="Yamamoto J."/>
            <person name="Saito K."/>
            <person name="Kawai Y."/>
            <person name="Isono Y."/>
            <person name="Nakamura Y."/>
            <person name="Nagahari K."/>
            <person name="Murakami K."/>
            <person name="Yasuda T."/>
            <person name="Iwayanagi T."/>
            <person name="Wagatsuma M."/>
            <person name="Shiratori A."/>
            <person name="Sudo H."/>
            <person name="Hosoiri T."/>
            <person name="Kaku Y."/>
            <person name="Kodaira H."/>
            <person name="Kondo H."/>
            <person name="Sugawara M."/>
            <person name="Takahashi M."/>
            <person name="Kanda K."/>
            <person name="Yokoi T."/>
            <person name="Furuya T."/>
            <person name="Kikkawa E."/>
            <person name="Omura Y."/>
            <person name="Abe K."/>
            <person name="Kamihara K."/>
            <person name="Katsuta N."/>
            <person name="Sato K."/>
            <person name="Tanikawa M."/>
            <person name="Yamazaki M."/>
            <person name="Ninomiya K."/>
            <person name="Ishibashi T."/>
            <person name="Yamashita H."/>
            <person name="Murakawa K."/>
            <person name="Fujimori K."/>
            <person name="Tanai H."/>
            <person name="Kimata M."/>
            <person name="Watanabe M."/>
            <person name="Hiraoka S."/>
            <person name="Chiba Y."/>
            <person name="Ishida S."/>
            <person name="Ono Y."/>
            <person name="Takiguchi S."/>
            <person name="Watanabe S."/>
            <person name="Yosida M."/>
            <person name="Hotuta T."/>
            <person name="Kusano J."/>
            <person name="Kanehori K."/>
            <person name="Takahashi-Fujii A."/>
            <person name="Hara H."/>
            <person name="Tanase T.-O."/>
            <person name="Nomura Y."/>
            <person name="Togiya S."/>
            <person name="Komai F."/>
            <person name="Hara R."/>
            <person name="Takeuchi K."/>
            <person name="Arita M."/>
            <person name="Imose N."/>
            <person name="Musashino K."/>
            <person name="Yuuki H."/>
            <person name="Oshima A."/>
            <person name="Sasaki N."/>
            <person name="Aotsuka S."/>
            <person name="Yoshikawa Y."/>
            <person name="Matsunawa H."/>
            <person name="Ichihara T."/>
            <person name="Shiohata N."/>
            <person name="Sano S."/>
            <person name="Moriya S."/>
            <person name="Momiyama H."/>
            <person name="Satoh N."/>
            <person name="Takami S."/>
            <person name="Terashima Y."/>
            <person name="Suzuki O."/>
            <person name="Nakagawa S."/>
            <person name="Senoh A."/>
            <person name="Mizoguchi H."/>
            <person name="Goto Y."/>
            <person name="Shimizu F."/>
            <person name="Wakebe H."/>
            <person name="Hishigaki H."/>
            <person name="Watanabe T."/>
            <person name="Sugiyama A."/>
            <person name="Takemoto M."/>
            <person name="Kawakami B."/>
            <person name="Yamazaki M."/>
            <person name="Watanabe K."/>
            <person name="Kumagai A."/>
            <person name="Itakura S."/>
            <person name="Fukuzumi Y."/>
            <person name="Fujimori Y."/>
            <person name="Komiyama M."/>
            <person name="Tashiro H."/>
            <person name="Tanigami A."/>
            <person name="Fujiwara T."/>
            <person name="Ono T."/>
            <person name="Yamada K."/>
            <person name="Fujii Y."/>
            <person name="Ozaki K."/>
            <person name="Hirao M."/>
            <person name="Ohmori Y."/>
            <person name="Kawabata A."/>
            <person name="Hikiji T."/>
            <person name="Kobatake N."/>
            <person name="Inagaki H."/>
            <person name="Ikema Y."/>
            <person name="Okamoto S."/>
            <person name="Okitani R."/>
            <person name="Kawakami T."/>
            <person name="Noguchi S."/>
            <person name="Itoh T."/>
            <person name="Shigeta K."/>
            <person name="Senba T."/>
            <person name="Matsumura K."/>
            <person name="Nakajima Y."/>
            <person name="Mizuno T."/>
            <person name="Morinaga M."/>
            <person name="Sasaki M."/>
            <person name="Togashi T."/>
            <person name="Oyama M."/>
            <person name="Hata H."/>
            <person name="Watanabe M."/>
            <person name="Komatsu T."/>
            <person name="Mizushima-Sugano J."/>
            <person name="Satoh T."/>
            <person name="Shirai Y."/>
            <person name="Takahashi Y."/>
            <person name="Nakagawa K."/>
            <person name="Okumura K."/>
            <person name="Nagase T."/>
            <person name="Nomura N."/>
            <person name="Kikuchi H."/>
            <person name="Masuho Y."/>
            <person name="Yamashita R."/>
            <person name="Nakai K."/>
            <person name="Yada T."/>
            <person name="Nakamura Y."/>
            <person name="Ohara O."/>
            <person name="Isogai T."/>
            <person name="Sugano S."/>
        </authorList>
    </citation>
    <scope>NUCLEOTIDE SEQUENCE [LARGE SCALE MRNA] (ISOFORMS 1 AND 2)</scope>
    <source>
        <tissue>Brain</tissue>
        <tissue>Kidney</tissue>
    </source>
</reference>
<reference key="6">
    <citation type="journal article" date="1999" name="Nature">
        <title>The DNA sequence of human chromosome 22.</title>
        <authorList>
            <person name="Dunham I."/>
            <person name="Hunt A.R."/>
            <person name="Collins J.E."/>
            <person name="Bruskiewich R."/>
            <person name="Beare D.M."/>
            <person name="Clamp M."/>
            <person name="Smink L.J."/>
            <person name="Ainscough R."/>
            <person name="Almeida J.P."/>
            <person name="Babbage A.K."/>
            <person name="Bagguley C."/>
            <person name="Bailey J."/>
            <person name="Barlow K.F."/>
            <person name="Bates K.N."/>
            <person name="Beasley O.P."/>
            <person name="Bird C.P."/>
            <person name="Blakey S.E."/>
            <person name="Bridgeman A.M."/>
            <person name="Buck D."/>
            <person name="Burgess J."/>
            <person name="Burrill W.D."/>
            <person name="Burton J."/>
            <person name="Carder C."/>
            <person name="Carter N.P."/>
            <person name="Chen Y."/>
            <person name="Clark G."/>
            <person name="Clegg S.M."/>
            <person name="Cobley V.E."/>
            <person name="Cole C.G."/>
            <person name="Collier R.E."/>
            <person name="Connor R."/>
            <person name="Conroy D."/>
            <person name="Corby N.R."/>
            <person name="Coville G.J."/>
            <person name="Cox A.V."/>
            <person name="Davis J."/>
            <person name="Dawson E."/>
            <person name="Dhami P.D."/>
            <person name="Dockree C."/>
            <person name="Dodsworth S.J."/>
            <person name="Durbin R.M."/>
            <person name="Ellington A.G."/>
            <person name="Evans K.L."/>
            <person name="Fey J.M."/>
            <person name="Fleming K."/>
            <person name="French L."/>
            <person name="Garner A.A."/>
            <person name="Gilbert J.G.R."/>
            <person name="Goward M.E."/>
            <person name="Grafham D.V."/>
            <person name="Griffiths M.N.D."/>
            <person name="Hall C."/>
            <person name="Hall R.E."/>
            <person name="Hall-Tamlyn G."/>
            <person name="Heathcott R.W."/>
            <person name="Ho S."/>
            <person name="Holmes S."/>
            <person name="Hunt S.E."/>
            <person name="Jones M.C."/>
            <person name="Kershaw J."/>
            <person name="Kimberley A.M."/>
            <person name="King A."/>
            <person name="Laird G.K."/>
            <person name="Langford C.F."/>
            <person name="Leversha M.A."/>
            <person name="Lloyd C."/>
            <person name="Lloyd D.M."/>
            <person name="Martyn I.D."/>
            <person name="Mashreghi-Mohammadi M."/>
            <person name="Matthews L.H."/>
            <person name="Mccann O.T."/>
            <person name="Mcclay J."/>
            <person name="Mclaren S."/>
            <person name="McMurray A.A."/>
            <person name="Milne S.A."/>
            <person name="Mortimore B.J."/>
            <person name="Odell C.N."/>
            <person name="Pavitt R."/>
            <person name="Pearce A.V."/>
            <person name="Pearson D."/>
            <person name="Phillimore B.J.C.T."/>
            <person name="Phillips S.H."/>
            <person name="Plumb R.W."/>
            <person name="Ramsay H."/>
            <person name="Ramsey Y."/>
            <person name="Rogers L."/>
            <person name="Ross M.T."/>
            <person name="Scott C.E."/>
            <person name="Sehra H.K."/>
            <person name="Skuce C.D."/>
            <person name="Smalley S."/>
            <person name="Smith M.L."/>
            <person name="Soderlund C."/>
            <person name="Spragon L."/>
            <person name="Steward C.A."/>
            <person name="Sulston J.E."/>
            <person name="Swann R.M."/>
            <person name="Vaudin M."/>
            <person name="Wall M."/>
            <person name="Wallis J.M."/>
            <person name="Whiteley M.N."/>
            <person name="Willey D.L."/>
            <person name="Williams L."/>
            <person name="Williams S.A."/>
            <person name="Williamson H."/>
            <person name="Wilmer T.E."/>
            <person name="Wilming L."/>
            <person name="Wright C.L."/>
            <person name="Hubbard T."/>
            <person name="Bentley D.R."/>
            <person name="Beck S."/>
            <person name="Rogers J."/>
            <person name="Shimizu N."/>
            <person name="Minoshima S."/>
            <person name="Kawasaki K."/>
            <person name="Sasaki T."/>
            <person name="Asakawa S."/>
            <person name="Kudoh J."/>
            <person name="Shintani A."/>
            <person name="Shibuya K."/>
            <person name="Yoshizaki Y."/>
            <person name="Aoki N."/>
            <person name="Mitsuyama S."/>
            <person name="Roe B.A."/>
            <person name="Chen F."/>
            <person name="Chu L."/>
            <person name="Crabtree J."/>
            <person name="Deschamps S."/>
            <person name="Do A."/>
            <person name="Do T."/>
            <person name="Dorman A."/>
            <person name="Fang F."/>
            <person name="Fu Y."/>
            <person name="Hu P."/>
            <person name="Hua A."/>
            <person name="Kenton S."/>
            <person name="Lai H."/>
            <person name="Lao H.I."/>
            <person name="Lewis J."/>
            <person name="Lewis S."/>
            <person name="Lin S.-P."/>
            <person name="Loh P."/>
            <person name="Malaj E."/>
            <person name="Nguyen T."/>
            <person name="Pan H."/>
            <person name="Phan S."/>
            <person name="Qi S."/>
            <person name="Qian Y."/>
            <person name="Ray L."/>
            <person name="Ren Q."/>
            <person name="Shaull S."/>
            <person name="Sloan D."/>
            <person name="Song L."/>
            <person name="Wang Q."/>
            <person name="Wang Y."/>
            <person name="Wang Z."/>
            <person name="White J."/>
            <person name="Willingham D."/>
            <person name="Wu H."/>
            <person name="Yao Z."/>
            <person name="Zhan M."/>
            <person name="Zhang G."/>
            <person name="Chissoe S."/>
            <person name="Murray J."/>
            <person name="Miller N."/>
            <person name="Minx P."/>
            <person name="Fulton R."/>
            <person name="Johnson D."/>
            <person name="Bemis G."/>
            <person name="Bentley D."/>
            <person name="Bradshaw H."/>
            <person name="Bourne S."/>
            <person name="Cordes M."/>
            <person name="Du Z."/>
            <person name="Fulton L."/>
            <person name="Goela D."/>
            <person name="Graves T."/>
            <person name="Hawkins J."/>
            <person name="Hinds K."/>
            <person name="Kemp K."/>
            <person name="Latreille P."/>
            <person name="Layman D."/>
            <person name="Ozersky P."/>
            <person name="Rohlfing T."/>
            <person name="Scheet P."/>
            <person name="Walker C."/>
            <person name="Wamsley A."/>
            <person name="Wohldmann P."/>
            <person name="Pepin K."/>
            <person name="Nelson J."/>
            <person name="Korf I."/>
            <person name="Bedell J.A."/>
            <person name="Hillier L.W."/>
            <person name="Mardis E."/>
            <person name="Waterston R."/>
            <person name="Wilson R."/>
            <person name="Emanuel B.S."/>
            <person name="Shaikh T."/>
            <person name="Kurahashi H."/>
            <person name="Saitta S."/>
            <person name="Budarf M.L."/>
            <person name="McDermid H.E."/>
            <person name="Johnson A."/>
            <person name="Wong A.C.C."/>
            <person name="Morrow B.E."/>
            <person name="Edelmann L."/>
            <person name="Kim U.J."/>
            <person name="Shizuya H."/>
            <person name="Simon M.I."/>
            <person name="Dumanski J.P."/>
            <person name="Peyrard M."/>
            <person name="Kedra D."/>
            <person name="Seroussi E."/>
            <person name="Fransson I."/>
            <person name="Tapia I."/>
            <person name="Bruder C.E."/>
            <person name="O'Brien K.P."/>
            <person name="Wilkinson P."/>
            <person name="Bodenteich A."/>
            <person name="Hartman K."/>
            <person name="Hu X."/>
            <person name="Khan A.S."/>
            <person name="Lane L."/>
            <person name="Tilahun Y."/>
            <person name="Wright H."/>
        </authorList>
    </citation>
    <scope>NUCLEOTIDE SEQUENCE [LARGE SCALE GENOMIC DNA]</scope>
</reference>
<reference key="7">
    <citation type="submission" date="2005-07" db="EMBL/GenBank/DDBJ databases">
        <authorList>
            <person name="Mural R.J."/>
            <person name="Istrail S."/>
            <person name="Sutton G.G."/>
            <person name="Florea L."/>
            <person name="Halpern A.L."/>
            <person name="Mobarry C.M."/>
            <person name="Lippert R."/>
            <person name="Walenz B."/>
            <person name="Shatkay H."/>
            <person name="Dew I."/>
            <person name="Miller J.R."/>
            <person name="Flanigan M.J."/>
            <person name="Edwards N.J."/>
            <person name="Bolanos R."/>
            <person name="Fasulo D."/>
            <person name="Halldorsson B.V."/>
            <person name="Hannenhalli S."/>
            <person name="Turner R."/>
            <person name="Yooseph S."/>
            <person name="Lu F."/>
            <person name="Nusskern D.R."/>
            <person name="Shue B.C."/>
            <person name="Zheng X.H."/>
            <person name="Zhong F."/>
            <person name="Delcher A.L."/>
            <person name="Huson D.H."/>
            <person name="Kravitz S.A."/>
            <person name="Mouchard L."/>
            <person name="Reinert K."/>
            <person name="Remington K.A."/>
            <person name="Clark A.G."/>
            <person name="Waterman M.S."/>
            <person name="Eichler E.E."/>
            <person name="Adams M.D."/>
            <person name="Hunkapiller M.W."/>
            <person name="Myers E.W."/>
            <person name="Venter J.C."/>
        </authorList>
    </citation>
    <scope>NUCLEOTIDE SEQUENCE [LARGE SCALE GENOMIC DNA]</scope>
</reference>
<reference key="8">
    <citation type="journal article" date="2004" name="Genome Res.">
        <title>The status, quality, and expansion of the NIH full-length cDNA project: the Mammalian Gene Collection (MGC).</title>
        <authorList>
            <consortium name="The MGC Project Team"/>
        </authorList>
    </citation>
    <scope>NUCLEOTIDE SEQUENCE [LARGE SCALE MRNA] (ISOFORM 1)</scope>
    <source>
        <tissue>Brain</tissue>
    </source>
</reference>
<reference key="9">
    <citation type="journal article" date="2003" name="Nat. Biotechnol.">
        <title>Exploring proteomes and analyzing protein processing by mass spectrometric identification of sorted N-terminal peptides.</title>
        <authorList>
            <person name="Gevaert K."/>
            <person name="Goethals M."/>
            <person name="Martens L."/>
            <person name="Van Damme J."/>
            <person name="Staes A."/>
            <person name="Thomas G.R."/>
            <person name="Vandekerckhove J."/>
        </authorList>
    </citation>
    <scope>PROTEIN SEQUENCE OF 2-14</scope>
    <source>
        <tissue>Platelet</tissue>
    </source>
</reference>
<reference key="10">
    <citation type="journal article" date="2012" name="Hum. Mol. Genet.">
        <title>Megalencephalic leukoencephalopathy with subcortical cysts protein 1 functionally cooperates with the TRPV4 cation channel to activate the response of astrocytes to osmotic stress: dysregulation by pathological mutations.</title>
        <authorList>
            <person name="Lanciotti A."/>
            <person name="Brignone M.S."/>
            <person name="Molinari P."/>
            <person name="Visentin S."/>
            <person name="De Nuccio C."/>
            <person name="Macchia G."/>
            <person name="Aiello C."/>
            <person name="Bertini E."/>
            <person name="Aloisi F."/>
            <person name="Petrucci T.C."/>
            <person name="Ambrosini E."/>
        </authorList>
    </citation>
    <scope>FUNCTION</scope>
    <scope>SUBCELLULAR LOCATION</scope>
    <scope>SUBUNIT</scope>
    <scope>INTERACTION WITH ATP1B1</scope>
    <scope>CHARACTERIZATION OF VARIANTS MLC1 ARG-125; ARG-246 AND LEU-280</scope>
</reference>
<reference key="11">
    <citation type="journal article" date="2001" name="Am. J. Hum. Genet.">
        <title>Mutations of MLC1 (KIAA0027), encoding a putative membrane protein, cause megalencephalic leukoencephalopathy with subcortical cysts.</title>
        <authorList>
            <person name="Leegwater P.A.J."/>
            <person name="Yuan B.Q."/>
            <person name="van der Steen J."/>
            <person name="Mulders J."/>
            <person name="Koenst A.A.M."/>
            <person name="Ilja Boor P.K."/>
            <person name="Mejaski-Bosnjak V."/>
            <person name="van der Maarel S.M."/>
            <person name="Frants R.R."/>
            <person name="Oudejans C.B.M."/>
            <person name="Schutgens R.B.H."/>
            <person name="Pronk J.C."/>
            <person name="van der Knapp M.S."/>
        </authorList>
    </citation>
    <scope>VARIANTS MLC1 LEU-93; ARG-118; ARG-212 AND LEU-280</scope>
</reference>
<reference key="12">
    <citation type="journal article" date="2002" name="Hum. Genet.">
        <title>Identification of novel mutations in MLC1 responsible for megalencephalic leukoencephalopathy with subcortical cysts.</title>
        <authorList>
            <person name="Leegwater P.A.J."/>
            <person name="Boor P.K.I."/>
            <person name="Yuan B.Q."/>
            <person name="van der Steen J."/>
            <person name="Visser A."/>
            <person name="Konst A.A.M."/>
            <person name="Oudejans C.B.M."/>
            <person name="Schutgens R.B.H."/>
            <person name="Pronk J.C."/>
            <person name="van der Knaap M.S."/>
        </authorList>
    </citation>
    <scope>VARIANTS MLC1 SER-92; ARG-125; LYS-141; SER-141 AND ARG-246</scope>
</reference>
<reference key="13">
    <citation type="journal article" date="2002" name="Hum. Genet.">
        <title>Megalencephalic leukoencephalopathy with subcortical cysts; a founder effect in Israeli patients and a higher than expected carrier rate among Libyan Jews.</title>
        <authorList>
            <person name="Ben-Zeev B."/>
            <person name="Levy-Nissenbaum E."/>
            <person name="Lahat H."/>
            <person name="Anikster Y."/>
            <person name="Shinar Y."/>
            <person name="Brand N."/>
            <person name="Gross-Tzur V."/>
            <person name="MacGregor D."/>
            <person name="Sidi R."/>
            <person name="Kleta R."/>
            <person name="Frydman M."/>
            <person name="Pras E."/>
        </authorList>
    </citation>
    <scope>VARIANT MLC1 GLU-59</scope>
</reference>
<reference key="14">
    <citation type="journal article" date="2006" name="Hum. Mutat.">
        <title>Megalencephalic leukoencephalopathy with subcortical cysts: an update and extended mutation analysis of MLC1.</title>
        <authorList>
            <person name="Ilja Boor P.K."/>
            <person name="de Groot K."/>
            <person name="Mejaski-Bosnjak V."/>
            <person name="Brenner C."/>
            <person name="van der Knaap M.S."/>
            <person name="Scheper G.C."/>
            <person name="Pronk J.C."/>
        </authorList>
    </citation>
    <scope>VARIANTS MLC1 LEU-69; ILE-80; CYS-84; PRO-245 AND LYS-320</scope>
</reference>
<organism>
    <name type="scientific">Homo sapiens</name>
    <name type="common">Human</name>
    <dbReference type="NCBI Taxonomy" id="9606"/>
    <lineage>
        <taxon>Eukaryota</taxon>
        <taxon>Metazoa</taxon>
        <taxon>Chordata</taxon>
        <taxon>Craniata</taxon>
        <taxon>Vertebrata</taxon>
        <taxon>Euteleostomi</taxon>
        <taxon>Mammalia</taxon>
        <taxon>Eutheria</taxon>
        <taxon>Euarchontoglires</taxon>
        <taxon>Primates</taxon>
        <taxon>Haplorrhini</taxon>
        <taxon>Catarrhini</taxon>
        <taxon>Hominidae</taxon>
        <taxon>Homo</taxon>
    </lineage>
</organism>
<gene>
    <name evidence="17" type="primary">MLC1</name>
    <name evidence="11" type="synonym">KIAA0027</name>
    <name evidence="12" type="synonym">WKL1</name>
</gene>
<accession>Q15049</accession>
<accession>B3KW61</accession>
<accession>B7Z659</accession>
<accession>Q5JZ83</accession>
<accession>Q8TAG4</accession>
<accession>Q96RP5</accession>
<accession>Q9UGY8</accession>
<protein>
    <recommendedName>
        <fullName evidence="11">Membrane protein MLC1</fullName>
    </recommendedName>
    <alternativeName>
        <fullName evidence="14">Megalencephalic leukoencephalopathy with subcortical cysts protein 1</fullName>
    </alternativeName>
</protein>